<dbReference type="EC" id="5.2.1.8" evidence="1"/>
<dbReference type="EMBL" id="CP000422">
    <property type="protein sequence ID" value="ABJ68196.1"/>
    <property type="molecule type" value="Genomic_DNA"/>
</dbReference>
<dbReference type="RefSeq" id="WP_011673519.1">
    <property type="nucleotide sequence ID" value="NC_008525.1"/>
</dbReference>
<dbReference type="SMR" id="Q03F26"/>
<dbReference type="STRING" id="278197.PEPE_1142"/>
<dbReference type="GeneID" id="33062432"/>
<dbReference type="KEGG" id="ppe:PEPE_1142"/>
<dbReference type="eggNOG" id="COG0544">
    <property type="taxonomic scope" value="Bacteria"/>
</dbReference>
<dbReference type="HOGENOM" id="CLU_033058_3_2_9"/>
<dbReference type="OrthoDB" id="9767721at2"/>
<dbReference type="Proteomes" id="UP000000773">
    <property type="component" value="Chromosome"/>
</dbReference>
<dbReference type="GO" id="GO:0005737">
    <property type="term" value="C:cytoplasm"/>
    <property type="evidence" value="ECO:0007669"/>
    <property type="project" value="UniProtKB-SubCell"/>
</dbReference>
<dbReference type="GO" id="GO:0003755">
    <property type="term" value="F:peptidyl-prolyl cis-trans isomerase activity"/>
    <property type="evidence" value="ECO:0007669"/>
    <property type="project" value="UniProtKB-UniRule"/>
</dbReference>
<dbReference type="GO" id="GO:0044183">
    <property type="term" value="F:protein folding chaperone"/>
    <property type="evidence" value="ECO:0007669"/>
    <property type="project" value="TreeGrafter"/>
</dbReference>
<dbReference type="GO" id="GO:0043022">
    <property type="term" value="F:ribosome binding"/>
    <property type="evidence" value="ECO:0007669"/>
    <property type="project" value="TreeGrafter"/>
</dbReference>
<dbReference type="GO" id="GO:0051083">
    <property type="term" value="P:'de novo' cotranslational protein folding"/>
    <property type="evidence" value="ECO:0007669"/>
    <property type="project" value="TreeGrafter"/>
</dbReference>
<dbReference type="GO" id="GO:0051301">
    <property type="term" value="P:cell division"/>
    <property type="evidence" value="ECO:0007669"/>
    <property type="project" value="UniProtKB-KW"/>
</dbReference>
<dbReference type="GO" id="GO:0061077">
    <property type="term" value="P:chaperone-mediated protein folding"/>
    <property type="evidence" value="ECO:0007669"/>
    <property type="project" value="TreeGrafter"/>
</dbReference>
<dbReference type="GO" id="GO:0015031">
    <property type="term" value="P:protein transport"/>
    <property type="evidence" value="ECO:0007669"/>
    <property type="project" value="UniProtKB-UniRule"/>
</dbReference>
<dbReference type="GO" id="GO:0043335">
    <property type="term" value="P:protein unfolding"/>
    <property type="evidence" value="ECO:0007669"/>
    <property type="project" value="TreeGrafter"/>
</dbReference>
<dbReference type="FunFam" id="3.10.50.40:FF:000001">
    <property type="entry name" value="Trigger factor"/>
    <property type="match status" value="1"/>
</dbReference>
<dbReference type="Gene3D" id="3.10.50.40">
    <property type="match status" value="1"/>
</dbReference>
<dbReference type="Gene3D" id="3.30.70.1050">
    <property type="entry name" value="Trigger factor ribosome-binding domain"/>
    <property type="match status" value="1"/>
</dbReference>
<dbReference type="Gene3D" id="1.10.3120.10">
    <property type="entry name" value="Trigger factor, C-terminal domain"/>
    <property type="match status" value="1"/>
</dbReference>
<dbReference type="HAMAP" id="MF_00303">
    <property type="entry name" value="Trigger_factor_Tig"/>
    <property type="match status" value="1"/>
</dbReference>
<dbReference type="InterPro" id="IPR046357">
    <property type="entry name" value="PPIase_dom_sf"/>
</dbReference>
<dbReference type="InterPro" id="IPR001179">
    <property type="entry name" value="PPIase_FKBP_dom"/>
</dbReference>
<dbReference type="InterPro" id="IPR005215">
    <property type="entry name" value="Trig_fac"/>
</dbReference>
<dbReference type="InterPro" id="IPR008880">
    <property type="entry name" value="Trigger_fac_C"/>
</dbReference>
<dbReference type="InterPro" id="IPR037041">
    <property type="entry name" value="Trigger_fac_C_sf"/>
</dbReference>
<dbReference type="InterPro" id="IPR008881">
    <property type="entry name" value="Trigger_fac_ribosome-bd_bac"/>
</dbReference>
<dbReference type="InterPro" id="IPR036611">
    <property type="entry name" value="Trigger_fac_ribosome-bd_sf"/>
</dbReference>
<dbReference type="InterPro" id="IPR027304">
    <property type="entry name" value="Trigger_fact/SurA_dom_sf"/>
</dbReference>
<dbReference type="NCBIfam" id="TIGR00115">
    <property type="entry name" value="tig"/>
    <property type="match status" value="1"/>
</dbReference>
<dbReference type="PANTHER" id="PTHR30560">
    <property type="entry name" value="TRIGGER FACTOR CHAPERONE AND PEPTIDYL-PROLYL CIS/TRANS ISOMERASE"/>
    <property type="match status" value="1"/>
</dbReference>
<dbReference type="PANTHER" id="PTHR30560:SF3">
    <property type="entry name" value="TRIGGER FACTOR-LIKE PROTEIN TIG, CHLOROPLASTIC"/>
    <property type="match status" value="1"/>
</dbReference>
<dbReference type="Pfam" id="PF00254">
    <property type="entry name" value="FKBP_C"/>
    <property type="match status" value="1"/>
</dbReference>
<dbReference type="Pfam" id="PF05698">
    <property type="entry name" value="Trigger_C"/>
    <property type="match status" value="1"/>
</dbReference>
<dbReference type="Pfam" id="PF05697">
    <property type="entry name" value="Trigger_N"/>
    <property type="match status" value="1"/>
</dbReference>
<dbReference type="PIRSF" id="PIRSF003095">
    <property type="entry name" value="Trigger_factor"/>
    <property type="match status" value="1"/>
</dbReference>
<dbReference type="SUPFAM" id="SSF54534">
    <property type="entry name" value="FKBP-like"/>
    <property type="match status" value="1"/>
</dbReference>
<dbReference type="SUPFAM" id="SSF109998">
    <property type="entry name" value="Triger factor/SurA peptide-binding domain-like"/>
    <property type="match status" value="1"/>
</dbReference>
<dbReference type="SUPFAM" id="SSF102735">
    <property type="entry name" value="Trigger factor ribosome-binding domain"/>
    <property type="match status" value="1"/>
</dbReference>
<dbReference type="PROSITE" id="PS50059">
    <property type="entry name" value="FKBP_PPIASE"/>
    <property type="match status" value="1"/>
</dbReference>
<name>TIG_PEDPA</name>
<protein>
    <recommendedName>
        <fullName evidence="1">Trigger factor</fullName>
        <shortName evidence="1">TF</shortName>
        <ecNumber evidence="1">5.2.1.8</ecNumber>
    </recommendedName>
    <alternativeName>
        <fullName evidence="1">PPIase</fullName>
    </alternativeName>
</protein>
<proteinExistence type="inferred from homology"/>
<evidence type="ECO:0000255" key="1">
    <source>
        <dbReference type="HAMAP-Rule" id="MF_00303"/>
    </source>
</evidence>
<keyword id="KW-0131">Cell cycle</keyword>
<keyword id="KW-0132">Cell division</keyword>
<keyword id="KW-0143">Chaperone</keyword>
<keyword id="KW-0963">Cytoplasm</keyword>
<keyword id="KW-0413">Isomerase</keyword>
<keyword id="KW-0697">Rotamase</keyword>
<organism>
    <name type="scientific">Pediococcus pentosaceus (strain ATCC 25745 / CCUG 21536 / LMG 10740 / 183-1w)</name>
    <dbReference type="NCBI Taxonomy" id="278197"/>
    <lineage>
        <taxon>Bacteria</taxon>
        <taxon>Bacillati</taxon>
        <taxon>Bacillota</taxon>
        <taxon>Bacilli</taxon>
        <taxon>Lactobacillales</taxon>
        <taxon>Lactobacillaceae</taxon>
        <taxon>Pediococcus</taxon>
    </lineage>
</organism>
<gene>
    <name evidence="1" type="primary">tig</name>
    <name type="ordered locus">PEPE_1142</name>
</gene>
<sequence>MTAKWEKTGTNEGKLTFEVGTDKIKEGVDKAFDRTKKQLNVPGFRKGHVPRQIFNKMYGEEALYQDALNIVLPEAYEAAIKEAGIEPVDQPQVDVESMEKGEAWVLSAIVTVKPEVKLGEYKGVKVIKQSTRVTSKEVDEEIEKKREQQAELVLKEGKPAENGDTVTIDFDGSVDGVAFDGGKADNYDLVLGSNSFIPGFEDQLIGHNTDEDVDVNVTFPDDYQAEDLQGKDALFKVKIHEIKTKELPELDDEFAKDVDEDVDSLEDLKVKTKEEIKSRKIQAASDAKETEAVQAAVDNAEIAEIPEAMLNEDVDRQVNQYLANMQQQGISPEMYFQLTGSSEDQLRDQLREGAENRVKTTLVLEAIVEAEKIDPSDDEVAAEIKDLAEQYGMEEKAVRSALSEDMIKHDVAIKSAVELIKDSAIEEPKSKAAKK</sequence>
<accession>Q03F26</accession>
<reference key="1">
    <citation type="journal article" date="2006" name="Proc. Natl. Acad. Sci. U.S.A.">
        <title>Comparative genomics of the lactic acid bacteria.</title>
        <authorList>
            <person name="Makarova K.S."/>
            <person name="Slesarev A."/>
            <person name="Wolf Y.I."/>
            <person name="Sorokin A."/>
            <person name="Mirkin B."/>
            <person name="Koonin E.V."/>
            <person name="Pavlov A."/>
            <person name="Pavlova N."/>
            <person name="Karamychev V."/>
            <person name="Polouchine N."/>
            <person name="Shakhova V."/>
            <person name="Grigoriev I."/>
            <person name="Lou Y."/>
            <person name="Rohksar D."/>
            <person name="Lucas S."/>
            <person name="Huang K."/>
            <person name="Goodstein D.M."/>
            <person name="Hawkins T."/>
            <person name="Plengvidhya V."/>
            <person name="Welker D."/>
            <person name="Hughes J."/>
            <person name="Goh Y."/>
            <person name="Benson A."/>
            <person name="Baldwin K."/>
            <person name="Lee J.-H."/>
            <person name="Diaz-Muniz I."/>
            <person name="Dosti B."/>
            <person name="Smeianov V."/>
            <person name="Wechter W."/>
            <person name="Barabote R."/>
            <person name="Lorca G."/>
            <person name="Altermann E."/>
            <person name="Barrangou R."/>
            <person name="Ganesan B."/>
            <person name="Xie Y."/>
            <person name="Rawsthorne H."/>
            <person name="Tamir D."/>
            <person name="Parker C."/>
            <person name="Breidt F."/>
            <person name="Broadbent J.R."/>
            <person name="Hutkins R."/>
            <person name="O'Sullivan D."/>
            <person name="Steele J."/>
            <person name="Unlu G."/>
            <person name="Saier M.H. Jr."/>
            <person name="Klaenhammer T."/>
            <person name="Richardson P."/>
            <person name="Kozyavkin S."/>
            <person name="Weimer B.C."/>
            <person name="Mills D.A."/>
        </authorList>
    </citation>
    <scope>NUCLEOTIDE SEQUENCE [LARGE SCALE GENOMIC DNA]</scope>
    <source>
        <strain>ATCC 25745 / CCUG 21536 / LMG 10740 / 183-1w</strain>
    </source>
</reference>
<feature type="chain" id="PRO_1000022723" description="Trigger factor">
    <location>
        <begin position="1"/>
        <end position="435"/>
    </location>
</feature>
<feature type="domain" description="PPIase FKBP-type" evidence="1">
    <location>
        <begin position="163"/>
        <end position="248"/>
    </location>
</feature>
<comment type="function">
    <text evidence="1">Involved in protein export. Acts as a chaperone by maintaining the newly synthesized protein in an open conformation. Functions as a peptidyl-prolyl cis-trans isomerase.</text>
</comment>
<comment type="catalytic activity">
    <reaction evidence="1">
        <text>[protein]-peptidylproline (omega=180) = [protein]-peptidylproline (omega=0)</text>
        <dbReference type="Rhea" id="RHEA:16237"/>
        <dbReference type="Rhea" id="RHEA-COMP:10747"/>
        <dbReference type="Rhea" id="RHEA-COMP:10748"/>
        <dbReference type="ChEBI" id="CHEBI:83833"/>
        <dbReference type="ChEBI" id="CHEBI:83834"/>
        <dbReference type="EC" id="5.2.1.8"/>
    </reaction>
</comment>
<comment type="subcellular location">
    <subcellularLocation>
        <location>Cytoplasm</location>
    </subcellularLocation>
    <text evidence="1">About half TF is bound to the ribosome near the polypeptide exit tunnel while the other half is free in the cytoplasm.</text>
</comment>
<comment type="domain">
    <text evidence="1">Consists of 3 domains; the N-terminus binds the ribosome, the middle domain has PPIase activity, while the C-terminus has intrinsic chaperone activity on its own.</text>
</comment>
<comment type="similarity">
    <text evidence="1">Belongs to the FKBP-type PPIase family. Tig subfamily.</text>
</comment>